<name>FAF2_XENTR</name>
<dbReference type="EMBL" id="CR942713">
    <property type="protein sequence ID" value="CAJ82812.1"/>
    <property type="molecule type" value="mRNA"/>
</dbReference>
<dbReference type="RefSeq" id="NP_001039235.1">
    <property type="nucleotide sequence ID" value="NM_001045770.1"/>
</dbReference>
<dbReference type="SMR" id="Q28BP9"/>
<dbReference type="FunCoup" id="Q28BP9">
    <property type="interactions" value="3516"/>
</dbReference>
<dbReference type="STRING" id="8364.ENSXETP00000048152"/>
<dbReference type="PaxDb" id="8364-ENSXETP00000011515"/>
<dbReference type="GeneID" id="734096"/>
<dbReference type="KEGG" id="xtr:734096"/>
<dbReference type="AGR" id="Xenbase:XB-GENE-948050"/>
<dbReference type="CTD" id="23197"/>
<dbReference type="Xenbase" id="XB-GENE-948050">
    <property type="gene designation" value="faf2"/>
</dbReference>
<dbReference type="eggNOG" id="KOG1363">
    <property type="taxonomic scope" value="Eukaryota"/>
</dbReference>
<dbReference type="InParanoid" id="Q28BP9"/>
<dbReference type="OMA" id="ILIRHQW"/>
<dbReference type="OrthoDB" id="1026733at2759"/>
<dbReference type="Reactome" id="R-XTR-6798695">
    <property type="pathway name" value="Neutrophil degranulation"/>
</dbReference>
<dbReference type="Reactome" id="R-XTR-8980692">
    <property type="pathway name" value="RHOA GTPase cycle"/>
</dbReference>
<dbReference type="Proteomes" id="UP000008143">
    <property type="component" value="Chromosome 3"/>
</dbReference>
<dbReference type="Bgee" id="ENSXETG00000010945">
    <property type="expression patterns" value="Expressed in 2-cell stage embryo and 13 other cell types or tissues"/>
</dbReference>
<dbReference type="GO" id="GO:0005783">
    <property type="term" value="C:endoplasmic reticulum"/>
    <property type="evidence" value="ECO:0000250"/>
    <property type="project" value="UniProtKB"/>
</dbReference>
<dbReference type="GO" id="GO:0005811">
    <property type="term" value="C:lipid droplet"/>
    <property type="evidence" value="ECO:0007669"/>
    <property type="project" value="UniProtKB-SubCell"/>
</dbReference>
<dbReference type="GO" id="GO:0030674">
    <property type="term" value="F:protein-macromolecule adaptor activity"/>
    <property type="evidence" value="ECO:0000250"/>
    <property type="project" value="UniProtKB"/>
</dbReference>
<dbReference type="GO" id="GO:0035617">
    <property type="term" value="P:stress granule disassembly"/>
    <property type="evidence" value="ECO:0000250"/>
    <property type="project" value="UniProtKB"/>
</dbReference>
<dbReference type="CDD" id="cd02991">
    <property type="entry name" value="UAS_ETEA"/>
    <property type="match status" value="1"/>
</dbReference>
<dbReference type="CDD" id="cd14414">
    <property type="entry name" value="UBA_FAF2"/>
    <property type="match status" value="1"/>
</dbReference>
<dbReference type="CDD" id="cd16120">
    <property type="entry name" value="UBX_UBXN3B"/>
    <property type="match status" value="1"/>
</dbReference>
<dbReference type="FunFam" id="3.10.20.90:FF:000101">
    <property type="entry name" value="FAS-associated factor 2 isoform X2"/>
    <property type="match status" value="1"/>
</dbReference>
<dbReference type="FunFam" id="3.40.30.10:FF:000066">
    <property type="entry name" value="FAS-associated factor 2 isoform X2"/>
    <property type="match status" value="1"/>
</dbReference>
<dbReference type="FunFam" id="1.10.8.10:FF:000043">
    <property type="entry name" value="Fas-associated factor family member 2"/>
    <property type="match status" value="1"/>
</dbReference>
<dbReference type="Gene3D" id="1.10.8.10">
    <property type="entry name" value="DNA helicase RuvA subunit, C-terminal domain"/>
    <property type="match status" value="1"/>
</dbReference>
<dbReference type="Gene3D" id="3.40.30.10">
    <property type="entry name" value="Glutaredoxin"/>
    <property type="match status" value="1"/>
</dbReference>
<dbReference type="Gene3D" id="3.10.20.90">
    <property type="entry name" value="Phosphatidylinositol 3-kinase Catalytic Subunit, Chain A, domain 1"/>
    <property type="match status" value="1"/>
</dbReference>
<dbReference type="InterPro" id="IPR049483">
    <property type="entry name" value="FAF1_2-like_UAS"/>
</dbReference>
<dbReference type="InterPro" id="IPR036249">
    <property type="entry name" value="Thioredoxin-like_sf"/>
</dbReference>
<dbReference type="InterPro" id="IPR006577">
    <property type="entry name" value="UAS"/>
</dbReference>
<dbReference type="InterPro" id="IPR009060">
    <property type="entry name" value="UBA-like_sf"/>
</dbReference>
<dbReference type="InterPro" id="IPR054109">
    <property type="entry name" value="UBA_8"/>
</dbReference>
<dbReference type="InterPro" id="IPR029071">
    <property type="entry name" value="Ubiquitin-like_domsf"/>
</dbReference>
<dbReference type="InterPro" id="IPR001012">
    <property type="entry name" value="UBX_dom"/>
</dbReference>
<dbReference type="InterPro" id="IPR050730">
    <property type="entry name" value="UBX_domain-protein"/>
</dbReference>
<dbReference type="PANTHER" id="PTHR23322:SF1">
    <property type="entry name" value="FAS-ASSOCIATED FACTOR 2"/>
    <property type="match status" value="1"/>
</dbReference>
<dbReference type="PANTHER" id="PTHR23322">
    <property type="entry name" value="FAS-ASSOCIATED PROTEIN"/>
    <property type="match status" value="1"/>
</dbReference>
<dbReference type="Pfam" id="PF21021">
    <property type="entry name" value="FAF1"/>
    <property type="match status" value="1"/>
</dbReference>
<dbReference type="Pfam" id="PF22566">
    <property type="entry name" value="UBA_8"/>
    <property type="match status" value="1"/>
</dbReference>
<dbReference type="Pfam" id="PF00789">
    <property type="entry name" value="UBX"/>
    <property type="match status" value="1"/>
</dbReference>
<dbReference type="SMART" id="SM00594">
    <property type="entry name" value="UAS"/>
    <property type="match status" value="1"/>
</dbReference>
<dbReference type="SUPFAM" id="SSF52833">
    <property type="entry name" value="Thioredoxin-like"/>
    <property type="match status" value="1"/>
</dbReference>
<dbReference type="SUPFAM" id="SSF46934">
    <property type="entry name" value="UBA-like"/>
    <property type="match status" value="1"/>
</dbReference>
<dbReference type="SUPFAM" id="SSF54236">
    <property type="entry name" value="Ubiquitin-like"/>
    <property type="match status" value="1"/>
</dbReference>
<dbReference type="PROSITE" id="PS50033">
    <property type="entry name" value="UBX"/>
    <property type="match status" value="1"/>
</dbReference>
<protein>
    <recommendedName>
        <fullName>FAS-associated factor 2</fullName>
    </recommendedName>
    <alternativeName>
        <fullName>UBX domain-containing protein 8</fullName>
    </alternativeName>
</protein>
<organism>
    <name type="scientific">Xenopus tropicalis</name>
    <name type="common">Western clawed frog</name>
    <name type="synonym">Silurana tropicalis</name>
    <dbReference type="NCBI Taxonomy" id="8364"/>
    <lineage>
        <taxon>Eukaryota</taxon>
        <taxon>Metazoa</taxon>
        <taxon>Chordata</taxon>
        <taxon>Craniata</taxon>
        <taxon>Vertebrata</taxon>
        <taxon>Euteleostomi</taxon>
        <taxon>Amphibia</taxon>
        <taxon>Batrachia</taxon>
        <taxon>Anura</taxon>
        <taxon>Pipoidea</taxon>
        <taxon>Pipidae</taxon>
        <taxon>Xenopodinae</taxon>
        <taxon>Xenopus</taxon>
        <taxon>Silurana</taxon>
    </lineage>
</organism>
<accession>Q28BP9</accession>
<feature type="chain" id="PRO_0000244069" description="FAS-associated factor 2">
    <location>
        <begin position="1"/>
        <end position="445"/>
    </location>
</feature>
<feature type="domain" description="UBA">
    <location>
        <begin position="12"/>
        <end position="53"/>
    </location>
</feature>
<feature type="domain" description="UBX" evidence="3">
    <location>
        <begin position="357"/>
        <end position="439"/>
    </location>
</feature>
<feature type="region of interest" description="Disordered" evidence="4">
    <location>
        <begin position="303"/>
        <end position="354"/>
    </location>
</feature>
<feature type="coiled-coil region" evidence="2">
    <location>
        <begin position="275"/>
        <end position="353"/>
    </location>
</feature>
<feature type="compositionally biased region" description="Basic and acidic residues" evidence="4">
    <location>
        <begin position="303"/>
        <end position="348"/>
    </location>
</feature>
<sequence>MAAPEERELSQEQTEKLLQFQDLTGIESMDQCRQTLQQHNWNIEAAVQDRLNEQEGVPSVFNTTPNRPLQVNTADHRVYSYVVSRPQPRGLLGWGYYLIMLPFRITYYTLLDIFRFAVRFIRPDPRSRVTDPVGDVVSFIQLFEEKYGRIHPVFYQGTYSQALNDAKQELRFLLVYLHGEDHQDSDDFCRNTLCIPEVTNFLNSRMLFWACSTNKPEGFRVSQALRENTYPFLAMIMLKDRRMTVVGRLEGLIQPQDLINQLTFIVEANQTYLVSERLEREERNQTQVLRQQQDEAYLASLRADQEKERKKKEKQEQKRREEEEAQLKQMLEERKKRNLEEEKERKSECLPAEPVPDHPDNVKIIFKMPNGTRVERRFLFTQSLSVIHDFLFSLKETPEKFQIVTNFPRRVLPCLPSEEIPVPPTLQEAGLSQSQLLFVQDLTDD</sequence>
<proteinExistence type="evidence at transcript level"/>
<comment type="function">
    <text evidence="1">Plays an important role in endoplasmic reticulum-associated degradation (ERAD) that mediates ubiquitin-dependent degradation of misfolded endoplasmic reticulum proteins. Involved in inhibition of lipid droplet degradation. Involved in stress granule disassembly.</text>
</comment>
<comment type="subcellular location">
    <subcellularLocation>
        <location evidence="1">Cytoplasm</location>
    </subcellularLocation>
    <subcellularLocation>
        <location evidence="1">Lipid droplet</location>
    </subcellularLocation>
    <subcellularLocation>
        <location evidence="1">Endoplasmic reticulum</location>
    </subcellularLocation>
</comment>
<keyword id="KW-0175">Coiled coil</keyword>
<keyword id="KW-0963">Cytoplasm</keyword>
<keyword id="KW-0256">Endoplasmic reticulum</keyword>
<keyword id="KW-0551">Lipid droplet</keyword>
<keyword id="KW-1185">Reference proteome</keyword>
<reference key="1">
    <citation type="submission" date="2006-03" db="EMBL/GenBank/DDBJ databases">
        <authorList>
            <consortium name="NIH - Xenopus Gene Collection (XGC) project"/>
        </authorList>
    </citation>
    <scope>NUCLEOTIDE SEQUENCE [LARGE SCALE MRNA]</scope>
    <source>
        <tissue>Neurula</tissue>
    </source>
</reference>
<evidence type="ECO:0000250" key="1">
    <source>
        <dbReference type="UniProtKB" id="Q96CS3"/>
    </source>
</evidence>
<evidence type="ECO:0000255" key="2"/>
<evidence type="ECO:0000255" key="3">
    <source>
        <dbReference type="PROSITE-ProRule" id="PRU00215"/>
    </source>
</evidence>
<evidence type="ECO:0000256" key="4">
    <source>
        <dbReference type="SAM" id="MobiDB-lite"/>
    </source>
</evidence>
<gene>
    <name type="primary">faf2</name>
    <name type="synonym">ubxd8</name>
    <name type="ORF">TNeu075m11.1</name>
</gene>